<proteinExistence type="inferred from homology"/>
<dbReference type="EMBL" id="U49487">
    <property type="protein sequence ID" value="AAB51002.1"/>
    <property type="molecule type" value="Genomic_RNA"/>
</dbReference>
<dbReference type="SMR" id="O09688"/>
<dbReference type="GO" id="GO:0042025">
    <property type="term" value="C:host cell nucleus"/>
    <property type="evidence" value="ECO:0007669"/>
    <property type="project" value="UniProtKB-SubCell"/>
</dbReference>
<dbReference type="GO" id="GO:0044423">
    <property type="term" value="C:virion component"/>
    <property type="evidence" value="ECO:0007669"/>
    <property type="project" value="UniProtKB-KW"/>
</dbReference>
<dbReference type="GO" id="GO:0039675">
    <property type="term" value="P:exit of virus from host cell nucleus through nuclear pore"/>
    <property type="evidence" value="ECO:0007669"/>
    <property type="project" value="InterPro"/>
</dbReference>
<dbReference type="Gene3D" id="1.10.287.230">
    <property type="match status" value="1"/>
</dbReference>
<dbReference type="InterPro" id="IPR000968">
    <property type="entry name" value="Flu_NS2"/>
</dbReference>
<dbReference type="Pfam" id="PF00601">
    <property type="entry name" value="Flu_NS2"/>
    <property type="match status" value="1"/>
</dbReference>
<dbReference type="SUPFAM" id="SSF101156">
    <property type="entry name" value="Nonstructural protein ns2, Nep, M1-binding domain"/>
    <property type="match status" value="1"/>
</dbReference>
<name>NEP_I86A3</name>
<gene>
    <name type="primary">NS</name>
</gene>
<keyword id="KW-0025">Alternative splicing</keyword>
<keyword id="KW-1048">Host nucleus</keyword>
<keyword id="KW-0945">Host-virus interaction</keyword>
<keyword id="KW-0813">Transport</keyword>
<keyword id="KW-0946">Virion</keyword>
<reference key="1">
    <citation type="journal article" date="1996" name="J. Virol.">
        <title>Emergence of avian H1N1 influenza viruses in pigs in China.</title>
        <authorList>
            <person name="Guan Y."/>
            <person name="Shortridge K.F."/>
            <person name="Krauss S."/>
            <person name="Li P.H."/>
            <person name="Kawaoka Y."/>
            <person name="Webster R.G."/>
        </authorList>
    </citation>
    <scope>NUCLEOTIDE SEQUENCE [GENOMIC RNA]</scope>
</reference>
<comment type="function">
    <text evidence="1">Mediates the nuclear export of encapsidated genomic RNAs (ribonucleoproteins, RNPs). Acts as an adapter between viral RNPs complexes and the nuclear export machinery of the cell. Possesses no intrinsic RNA-binding activity, but includes a C-terminal M1-binding domain. This domain is believed to allow recognition of RNPs to which the M1 protein is bound. Because the M1 protein is not available in large quantities until the later stages of infection, such an indirect recognition mechanism probably ensures that genomic RNPs are not exported from the nucleus before sufficient quantities of viral mRNA and progeny genomic RNA have been synthesized. Furthermore, the RNPs enters the cytoplasm only when they have associated with the M1 protein that is necessary to guide them to the plasma membrane. May down-regulate viral RNA synthesis when overproduced (By similarity).</text>
</comment>
<comment type="subunit">
    <text evidence="1">Binds M1 protein. May interact with human nucleoporin RAB/HRB and exportin XPO1/CRM1 (By similarity).</text>
</comment>
<comment type="subcellular location">
    <subcellularLocation>
        <location evidence="2">Virion</location>
    </subcellularLocation>
    <subcellularLocation>
        <location evidence="1">Host nucleus</location>
    </subcellularLocation>
</comment>
<comment type="alternative products">
    <event type="alternative splicing"/>
    <isoform>
        <id>O09688-1</id>
        <name>NEP</name>
        <name>NS2</name>
        <sequence type="displayed"/>
    </isoform>
    <isoform>
        <id>Q9WA92-1</id>
        <name>NS1</name>
        <sequence type="external"/>
    </isoform>
</comment>
<comment type="similarity">
    <text evidence="2">Belongs to the influenza viruses NEP family.</text>
</comment>
<organismHost>
    <name type="scientific">Aves</name>
    <dbReference type="NCBI Taxonomy" id="8782"/>
</organismHost>
<organismHost>
    <name type="scientific">Equus caballus</name>
    <name type="common">Horse</name>
    <dbReference type="NCBI Taxonomy" id="9796"/>
</organismHost>
<evidence type="ECO:0000250" key="1"/>
<evidence type="ECO:0000305" key="2"/>
<protein>
    <recommendedName>
        <fullName>Nuclear export protein</fullName>
        <shortName>NEP</shortName>
    </recommendedName>
    <alternativeName>
        <fullName>Non structural protein 2</fullName>
        <shortName>NS2</shortName>
    </alternativeName>
</protein>
<sequence>NTVSSFQDILMRMSKMQLGSSSEDLNGMIIRLESLKLYRDSLGEAVMRMGDLHSLQSRNEKWREQLSQKFEEIRWLIEEVRHRLKNTENSFEQITFMQALQLLLEVEQEIRT</sequence>
<feature type="chain" id="PRO_0000324230" description="Nuclear export protein">
    <location>
        <begin position="1"/>
        <end position="112"/>
    </location>
</feature>
<feature type="short sequence motif" description="Nuclear export signal" evidence="1">
    <location>
        <begin position="9"/>
        <end position="18"/>
    </location>
</feature>
<feature type="short sequence motif" description="Nuclear export signal" evidence="1">
    <location>
        <begin position="82"/>
        <end position="91"/>
    </location>
</feature>
<feature type="non-terminal residue">
    <location>
        <position position="1"/>
    </location>
</feature>
<feature type="non-terminal residue">
    <location>
        <position position="112"/>
    </location>
</feature>
<accession>O09688</accession>
<organism>
    <name type="scientific">Influenza A virus (strain A/Equine/Tennessee/5/1986 H3N8)</name>
    <dbReference type="NCBI Taxonomy" id="380339"/>
    <lineage>
        <taxon>Viruses</taxon>
        <taxon>Riboviria</taxon>
        <taxon>Orthornavirae</taxon>
        <taxon>Negarnaviricota</taxon>
        <taxon>Polyploviricotina</taxon>
        <taxon>Insthoviricetes</taxon>
        <taxon>Articulavirales</taxon>
        <taxon>Orthomyxoviridae</taxon>
        <taxon>Alphainfluenzavirus</taxon>
        <taxon>Alphainfluenzavirus influenzae</taxon>
        <taxon>Influenza A virus</taxon>
    </lineage>
</organism>